<accession>Q9XXL3</accession>
<reference key="1">
    <citation type="journal article" date="1998" name="Science">
        <title>Genome sequence of the nematode C. elegans: a platform for investigating biology.</title>
        <authorList>
            <consortium name="The C. elegans sequencing consortium"/>
        </authorList>
    </citation>
    <scope>NUCLEOTIDE SEQUENCE [LARGE SCALE GENOMIC DNA]</scope>
    <source>
        <strain>Bristol N2</strain>
    </source>
</reference>
<reference key="2">
    <citation type="journal article" date="2004" name="Mol. Biochem. Parasitol.">
        <title>MSP domain proteins show enhanced expression in male germ line cells.</title>
        <authorList>
            <person name="Tarr D.E.K."/>
            <person name="Scott A.L."/>
        </authorList>
    </citation>
    <scope>TISSUE SPECIFICITY</scope>
</reference>
<evidence type="ECO:0000255" key="1">
    <source>
        <dbReference type="PROSITE-ProRule" id="PRU00132"/>
    </source>
</evidence>
<evidence type="ECO:0000269" key="2">
    <source>
    </source>
</evidence>
<protein>
    <recommendedName>
        <fullName>Sperm-specific class P protein 31</fullName>
    </recommendedName>
</protein>
<organism>
    <name type="scientific">Caenorhabditis elegans</name>
    <dbReference type="NCBI Taxonomy" id="6239"/>
    <lineage>
        <taxon>Eukaryota</taxon>
        <taxon>Metazoa</taxon>
        <taxon>Ecdysozoa</taxon>
        <taxon>Nematoda</taxon>
        <taxon>Chromadorea</taxon>
        <taxon>Rhabditida</taxon>
        <taxon>Rhabditina</taxon>
        <taxon>Rhabditomorpha</taxon>
        <taxon>Rhabditoidea</taxon>
        <taxon>Rhabditidae</taxon>
        <taxon>Peloderinae</taxon>
        <taxon>Caenorhabditis</taxon>
    </lineage>
</organism>
<gene>
    <name type="primary">ssp-31</name>
    <name type="ORF">ZK1225.6</name>
</gene>
<name>SSP31_CAEEL</name>
<keyword id="KW-1185">Reference proteome</keyword>
<dbReference type="EMBL" id="AL022289">
    <property type="protein sequence ID" value="CAA18373.1"/>
    <property type="molecule type" value="Genomic_DNA"/>
</dbReference>
<dbReference type="PIR" id="T27713">
    <property type="entry name" value="T27713"/>
</dbReference>
<dbReference type="RefSeq" id="NP_493318.1">
    <property type="nucleotide sequence ID" value="NM_060917.6"/>
</dbReference>
<dbReference type="SMR" id="Q9XXL3"/>
<dbReference type="BioGRID" id="38583">
    <property type="interactions" value="6"/>
</dbReference>
<dbReference type="DIP" id="DIP-24887N"/>
<dbReference type="FunCoup" id="Q9XXL3">
    <property type="interactions" value="10"/>
</dbReference>
<dbReference type="IntAct" id="Q9XXL3">
    <property type="interactions" value="6"/>
</dbReference>
<dbReference type="STRING" id="6239.ZK1225.6.1"/>
<dbReference type="PaxDb" id="6239-ZK1225.6"/>
<dbReference type="PeptideAtlas" id="Q9XXL3"/>
<dbReference type="EnsemblMetazoa" id="ZK1225.6.1">
    <property type="protein sequence ID" value="ZK1225.6.1"/>
    <property type="gene ID" value="WBGene00006048"/>
</dbReference>
<dbReference type="GeneID" id="173187"/>
<dbReference type="KEGG" id="cel:CELE_ZK1225.6"/>
<dbReference type="UCSC" id="ZK1225.6">
    <property type="organism name" value="c. elegans"/>
</dbReference>
<dbReference type="AGR" id="WB:WBGene00006048"/>
<dbReference type="CTD" id="173187"/>
<dbReference type="WormBase" id="ZK1225.6">
    <property type="protein sequence ID" value="CE19345"/>
    <property type="gene ID" value="WBGene00006048"/>
    <property type="gene designation" value="ssp-31"/>
</dbReference>
<dbReference type="eggNOG" id="ENOG502S66Y">
    <property type="taxonomic scope" value="Eukaryota"/>
</dbReference>
<dbReference type="GeneTree" id="ENSGT00970000195921"/>
<dbReference type="HOGENOM" id="CLU_147608_0_1_1"/>
<dbReference type="InParanoid" id="Q9XXL3"/>
<dbReference type="OMA" id="LEIMRMA"/>
<dbReference type="OrthoDB" id="264603at2759"/>
<dbReference type="PhylomeDB" id="Q9XXL3"/>
<dbReference type="PRO" id="PR:Q9XXL3"/>
<dbReference type="Proteomes" id="UP000001940">
    <property type="component" value="Chromosome I"/>
</dbReference>
<dbReference type="Bgee" id="WBGene00006048">
    <property type="expression patterns" value="Expressed in material anatomical entity and 2 other cell types or tissues"/>
</dbReference>
<dbReference type="Gene3D" id="2.60.40.10">
    <property type="entry name" value="Immunoglobulins"/>
    <property type="match status" value="1"/>
</dbReference>
<dbReference type="InterPro" id="IPR013783">
    <property type="entry name" value="Ig-like_fold"/>
</dbReference>
<dbReference type="InterPro" id="IPR000535">
    <property type="entry name" value="MSP_dom"/>
</dbReference>
<dbReference type="InterPro" id="IPR008962">
    <property type="entry name" value="PapD-like_sf"/>
</dbReference>
<dbReference type="InterPro" id="IPR051774">
    <property type="entry name" value="Sperm-specific_class_P"/>
</dbReference>
<dbReference type="PANTHER" id="PTHR22947">
    <property type="entry name" value="MAJOR SPERM PROTEIN"/>
    <property type="match status" value="1"/>
</dbReference>
<dbReference type="PANTHER" id="PTHR22947:SF3">
    <property type="entry name" value="MSP DOMAIN-CONTAINING PROTEIN-RELATED"/>
    <property type="match status" value="1"/>
</dbReference>
<dbReference type="Pfam" id="PF00635">
    <property type="entry name" value="Motile_Sperm"/>
    <property type="match status" value="1"/>
</dbReference>
<dbReference type="SUPFAM" id="SSF49354">
    <property type="entry name" value="PapD-like"/>
    <property type="match status" value="1"/>
</dbReference>
<dbReference type="PROSITE" id="PS50202">
    <property type="entry name" value="MSP"/>
    <property type="match status" value="1"/>
</dbReference>
<feature type="chain" id="PRO_0000213451" description="Sperm-specific class P protein 31">
    <location>
        <begin position="1"/>
        <end position="107"/>
    </location>
</feature>
<feature type="domain" description="MSP" evidence="1">
    <location>
        <begin position="1"/>
        <end position="107"/>
    </location>
</feature>
<sequence length="107" mass="11430">MINIDPPSGDYPASGGSSTHYIVSESESRLAFKVKSSNNESYRVRPVYGFVDAKGKAKLEVNRLAGPAKEDKLVIQYAEVPADETDPKAPFAAGAQQGEVVVKMVAS</sequence>
<comment type="interaction">
    <interactant intactId="EBI-327302">
        <id>Q9XXL3</id>
    </interactant>
    <interactant intactId="EBI-323809">
        <id>Q17436</id>
        <label>edg-1</label>
    </interactant>
    <organismsDiffer>false</organismsDiffer>
    <experiments>4</experiments>
</comment>
<comment type="tissue specificity">
    <text evidence="2">Expressed at higher level in testis.</text>
</comment>
<proteinExistence type="evidence at protein level"/>